<keyword id="KW-1185">Reference proteome</keyword>
<keyword id="KW-0687">Ribonucleoprotein</keyword>
<keyword id="KW-0689">Ribosomal protein</keyword>
<comment type="subunit">
    <text evidence="1">Part of the 50S ribosomal subunit. Contacts protein L32.</text>
</comment>
<comment type="similarity">
    <text evidence="1">Belongs to the bacterial ribosomal protein bL17 family.</text>
</comment>
<organism>
    <name type="scientific">Mycoplasmopsis pulmonis (strain UAB CTIP)</name>
    <name type="common">Mycoplasma pulmonis</name>
    <dbReference type="NCBI Taxonomy" id="272635"/>
    <lineage>
        <taxon>Bacteria</taxon>
        <taxon>Bacillati</taxon>
        <taxon>Mycoplasmatota</taxon>
        <taxon>Mycoplasmoidales</taxon>
        <taxon>Metamycoplasmataceae</taxon>
        <taxon>Mycoplasmopsis</taxon>
    </lineage>
</organism>
<sequence length="120" mass="13661">MANPTQLYRRNSTWRKNVLRSLSTEIIVNGKITTTLTRAKELRKVVDKLITKGKKNTLASRRLAAASMRKIKTKDGTDALKYLFDTLAPKYKNRNGGYTRIIKLPPRQGDNTKMAIIELV</sequence>
<evidence type="ECO:0000255" key="1">
    <source>
        <dbReference type="HAMAP-Rule" id="MF_01368"/>
    </source>
</evidence>
<evidence type="ECO:0000305" key="2"/>
<protein>
    <recommendedName>
        <fullName evidence="1">Large ribosomal subunit protein bL17</fullName>
    </recommendedName>
    <alternativeName>
        <fullName evidence="2">50S ribosomal protein L17</fullName>
    </alternativeName>
</protein>
<reference key="1">
    <citation type="journal article" date="2001" name="Nucleic Acids Res.">
        <title>The complete genome sequence of the murine respiratory pathogen Mycoplasma pulmonis.</title>
        <authorList>
            <person name="Chambaud I."/>
            <person name="Heilig R."/>
            <person name="Ferris S."/>
            <person name="Barbe V."/>
            <person name="Samson D."/>
            <person name="Galisson F."/>
            <person name="Moszer I."/>
            <person name="Dybvig K."/>
            <person name="Wroblewski H."/>
            <person name="Viari A."/>
            <person name="Rocha E.P.C."/>
            <person name="Blanchard A."/>
        </authorList>
    </citation>
    <scope>NUCLEOTIDE SEQUENCE [LARGE SCALE GENOMIC DNA]</scope>
    <source>
        <strain>UAB CTIP</strain>
    </source>
</reference>
<accession>Q98Q09</accession>
<feature type="chain" id="PRO_1000055880" description="Large ribosomal subunit protein bL17">
    <location>
        <begin position="1"/>
        <end position="120"/>
    </location>
</feature>
<gene>
    <name evidence="1" type="primary">rplQ</name>
    <name type="ordered locus">MYPU_5600</name>
</gene>
<name>RL17_MYCPU</name>
<dbReference type="EMBL" id="AL445565">
    <property type="protein sequence ID" value="CAC13733.1"/>
    <property type="molecule type" value="Genomic_DNA"/>
</dbReference>
<dbReference type="PIR" id="H90581">
    <property type="entry name" value="H90581"/>
</dbReference>
<dbReference type="RefSeq" id="WP_010925361.1">
    <property type="nucleotide sequence ID" value="NC_002771.1"/>
</dbReference>
<dbReference type="SMR" id="Q98Q09"/>
<dbReference type="STRING" id="272635.gene:17577167"/>
<dbReference type="KEGG" id="mpu:MYPU_5600"/>
<dbReference type="eggNOG" id="COG0203">
    <property type="taxonomic scope" value="Bacteria"/>
</dbReference>
<dbReference type="HOGENOM" id="CLU_074407_2_2_14"/>
<dbReference type="BioCyc" id="MPUL272635:G1GT6-573-MONOMER"/>
<dbReference type="Proteomes" id="UP000000528">
    <property type="component" value="Chromosome"/>
</dbReference>
<dbReference type="GO" id="GO:0022625">
    <property type="term" value="C:cytosolic large ribosomal subunit"/>
    <property type="evidence" value="ECO:0007669"/>
    <property type="project" value="TreeGrafter"/>
</dbReference>
<dbReference type="GO" id="GO:0003735">
    <property type="term" value="F:structural constituent of ribosome"/>
    <property type="evidence" value="ECO:0007669"/>
    <property type="project" value="InterPro"/>
</dbReference>
<dbReference type="GO" id="GO:0006412">
    <property type="term" value="P:translation"/>
    <property type="evidence" value="ECO:0007669"/>
    <property type="project" value="UniProtKB-UniRule"/>
</dbReference>
<dbReference type="Gene3D" id="3.90.1030.10">
    <property type="entry name" value="Ribosomal protein L17"/>
    <property type="match status" value="1"/>
</dbReference>
<dbReference type="HAMAP" id="MF_01368">
    <property type="entry name" value="Ribosomal_bL17"/>
    <property type="match status" value="1"/>
</dbReference>
<dbReference type="InterPro" id="IPR000456">
    <property type="entry name" value="Ribosomal_bL17"/>
</dbReference>
<dbReference type="InterPro" id="IPR047859">
    <property type="entry name" value="Ribosomal_bL17_CS"/>
</dbReference>
<dbReference type="InterPro" id="IPR036373">
    <property type="entry name" value="Ribosomal_bL17_sf"/>
</dbReference>
<dbReference type="NCBIfam" id="TIGR00059">
    <property type="entry name" value="L17"/>
    <property type="match status" value="1"/>
</dbReference>
<dbReference type="PANTHER" id="PTHR14413:SF16">
    <property type="entry name" value="LARGE RIBOSOMAL SUBUNIT PROTEIN BL17M"/>
    <property type="match status" value="1"/>
</dbReference>
<dbReference type="PANTHER" id="PTHR14413">
    <property type="entry name" value="RIBOSOMAL PROTEIN L17"/>
    <property type="match status" value="1"/>
</dbReference>
<dbReference type="Pfam" id="PF01196">
    <property type="entry name" value="Ribosomal_L17"/>
    <property type="match status" value="1"/>
</dbReference>
<dbReference type="SUPFAM" id="SSF64263">
    <property type="entry name" value="Prokaryotic ribosomal protein L17"/>
    <property type="match status" value="1"/>
</dbReference>
<dbReference type="PROSITE" id="PS01167">
    <property type="entry name" value="RIBOSOMAL_L17"/>
    <property type="match status" value="1"/>
</dbReference>
<proteinExistence type="inferred from homology"/>